<name>LEPA_BACVZ</name>
<reference key="1">
    <citation type="journal article" date="2007" name="Nat. Biotechnol.">
        <title>Comparative analysis of the complete genome sequence of the plant growth-promoting bacterium Bacillus amyloliquefaciens FZB42.</title>
        <authorList>
            <person name="Chen X.H."/>
            <person name="Koumoutsi A."/>
            <person name="Scholz R."/>
            <person name="Eisenreich A."/>
            <person name="Schneider K."/>
            <person name="Heinemeyer I."/>
            <person name="Morgenstern B."/>
            <person name="Voss B."/>
            <person name="Hess W.R."/>
            <person name="Reva O."/>
            <person name="Junge H."/>
            <person name="Voigt B."/>
            <person name="Jungblut P.R."/>
            <person name="Vater J."/>
            <person name="Suessmuth R."/>
            <person name="Liesegang H."/>
            <person name="Strittmatter A."/>
            <person name="Gottschalk G."/>
            <person name="Borriss R."/>
        </authorList>
    </citation>
    <scope>NUCLEOTIDE SEQUENCE [LARGE SCALE GENOMIC DNA]</scope>
    <source>
        <strain>DSM 23117 / BGSC 10A6 / LMG 26770 / FZB42</strain>
    </source>
</reference>
<proteinExistence type="inferred from homology"/>
<evidence type="ECO:0000255" key="1">
    <source>
        <dbReference type="HAMAP-Rule" id="MF_00071"/>
    </source>
</evidence>
<organism>
    <name type="scientific">Bacillus velezensis (strain DSM 23117 / BGSC 10A6 / LMG 26770 / FZB42)</name>
    <name type="common">Bacillus amyloliquefaciens subsp. plantarum</name>
    <dbReference type="NCBI Taxonomy" id="326423"/>
    <lineage>
        <taxon>Bacteria</taxon>
        <taxon>Bacillati</taxon>
        <taxon>Bacillota</taxon>
        <taxon>Bacilli</taxon>
        <taxon>Bacillales</taxon>
        <taxon>Bacillaceae</taxon>
        <taxon>Bacillus</taxon>
        <taxon>Bacillus amyloliquefaciens group</taxon>
    </lineage>
</organism>
<sequence>MTDKEKRLERQSRIRNFSIIAHIDHGKSTLADRILEKTSAITQREMKEQLLDSMDLERERGITIKLNSVQLKYKAKDGEEYIFHLIDTPGHVDFTYEVSRSLAACEGAILVVDAAQGIEAQTLANVYLALDNDLEILPVINKIDLPSAEPERVRQEVEDVIGLDASDAVLASAKAGIGIEDILEQIVEKVPAPAGDPEAPLKALIFDSLYDAYRGVVAYIRVVEGTVKPGQKIKMMATGKEFEVIEVGVFTPKAQPADELTVGDVGYLTAAIKNVGDTRVGDTITSAVKPAAEALPGYRKLNPMVYCGLYPIDTAKYNDLREALEKLELNDSSLQYEAETSQALGFGFRCGFLGMLHMEIIQERIEREFKIDLITTAPSVIYDVYMTDGEKIIVDNPSNMPDPQKIERVEEPYVKATMMVPNDYVGAVMELCQGKRGNFIDMQYLDANRVSIVYEMPLAEIVYEFFDQLKSSTKGYASFDYELIGYKPSKLVKMDIMLNGEKIDALSFIVHRDYAYERGKVIVEKLKELIPRQHFEVPIQAAIGQKIVARSTIKAMRKNVLAKCYGGDISRKRKLLEKQKEGKRRMKQVGSVEVPQEAFMAVLKMDDSPKK</sequence>
<gene>
    <name evidence="1" type="primary">lepA</name>
    <name type="ordered locus">RBAM_023810</name>
</gene>
<comment type="function">
    <text evidence="1">Required for accurate and efficient protein synthesis under certain stress conditions. May act as a fidelity factor of the translation reaction, by catalyzing a one-codon backward translocation of tRNAs on improperly translocated ribosomes. Back-translocation proceeds from a post-translocation (POST) complex to a pre-translocation (PRE) complex, thus giving elongation factor G a second chance to translocate the tRNAs correctly. Binds to ribosomes in a GTP-dependent manner.</text>
</comment>
<comment type="catalytic activity">
    <reaction evidence="1">
        <text>GTP + H2O = GDP + phosphate + H(+)</text>
        <dbReference type="Rhea" id="RHEA:19669"/>
        <dbReference type="ChEBI" id="CHEBI:15377"/>
        <dbReference type="ChEBI" id="CHEBI:15378"/>
        <dbReference type="ChEBI" id="CHEBI:37565"/>
        <dbReference type="ChEBI" id="CHEBI:43474"/>
        <dbReference type="ChEBI" id="CHEBI:58189"/>
        <dbReference type="EC" id="3.6.5.n1"/>
    </reaction>
</comment>
<comment type="subcellular location">
    <subcellularLocation>
        <location evidence="1">Cell membrane</location>
        <topology evidence="1">Peripheral membrane protein</topology>
        <orientation evidence="1">Cytoplasmic side</orientation>
    </subcellularLocation>
</comment>
<comment type="similarity">
    <text evidence="1">Belongs to the TRAFAC class translation factor GTPase superfamily. Classic translation factor GTPase family. LepA subfamily.</text>
</comment>
<keyword id="KW-1003">Cell membrane</keyword>
<keyword id="KW-0342">GTP-binding</keyword>
<keyword id="KW-0378">Hydrolase</keyword>
<keyword id="KW-0472">Membrane</keyword>
<keyword id="KW-0547">Nucleotide-binding</keyword>
<keyword id="KW-0648">Protein biosynthesis</keyword>
<protein>
    <recommendedName>
        <fullName evidence="1">Elongation factor 4</fullName>
        <shortName evidence="1">EF-4</shortName>
        <ecNumber evidence="1">3.6.5.n1</ecNumber>
    </recommendedName>
    <alternativeName>
        <fullName evidence="1">Ribosomal back-translocase LepA</fullName>
    </alternativeName>
</protein>
<feature type="chain" id="PRO_1000031967" description="Elongation factor 4">
    <location>
        <begin position="1"/>
        <end position="611"/>
    </location>
</feature>
<feature type="domain" description="tr-type G">
    <location>
        <begin position="12"/>
        <end position="194"/>
    </location>
</feature>
<feature type="binding site" evidence="1">
    <location>
        <begin position="24"/>
        <end position="29"/>
    </location>
    <ligand>
        <name>GTP</name>
        <dbReference type="ChEBI" id="CHEBI:37565"/>
    </ligand>
</feature>
<feature type="binding site" evidence="1">
    <location>
        <begin position="141"/>
        <end position="144"/>
    </location>
    <ligand>
        <name>GTP</name>
        <dbReference type="ChEBI" id="CHEBI:37565"/>
    </ligand>
</feature>
<dbReference type="EC" id="3.6.5.n1" evidence="1"/>
<dbReference type="EMBL" id="CP000560">
    <property type="protein sequence ID" value="ABS74741.1"/>
    <property type="molecule type" value="Genomic_DNA"/>
</dbReference>
<dbReference type="RefSeq" id="WP_012118023.1">
    <property type="nucleotide sequence ID" value="NC_009725.2"/>
</dbReference>
<dbReference type="SMR" id="A7Z6W5"/>
<dbReference type="GeneID" id="93081519"/>
<dbReference type="KEGG" id="bay:RBAM_023810"/>
<dbReference type="HOGENOM" id="CLU_009995_3_3_9"/>
<dbReference type="Proteomes" id="UP000001120">
    <property type="component" value="Chromosome"/>
</dbReference>
<dbReference type="GO" id="GO:0005886">
    <property type="term" value="C:plasma membrane"/>
    <property type="evidence" value="ECO:0007669"/>
    <property type="project" value="UniProtKB-SubCell"/>
</dbReference>
<dbReference type="GO" id="GO:0005525">
    <property type="term" value="F:GTP binding"/>
    <property type="evidence" value="ECO:0007669"/>
    <property type="project" value="UniProtKB-UniRule"/>
</dbReference>
<dbReference type="GO" id="GO:0003924">
    <property type="term" value="F:GTPase activity"/>
    <property type="evidence" value="ECO:0007669"/>
    <property type="project" value="UniProtKB-UniRule"/>
</dbReference>
<dbReference type="GO" id="GO:0043022">
    <property type="term" value="F:ribosome binding"/>
    <property type="evidence" value="ECO:0007669"/>
    <property type="project" value="UniProtKB-UniRule"/>
</dbReference>
<dbReference type="GO" id="GO:0003746">
    <property type="term" value="F:translation elongation factor activity"/>
    <property type="evidence" value="ECO:0007669"/>
    <property type="project" value="UniProtKB-UniRule"/>
</dbReference>
<dbReference type="GO" id="GO:0045727">
    <property type="term" value="P:positive regulation of translation"/>
    <property type="evidence" value="ECO:0007669"/>
    <property type="project" value="UniProtKB-UniRule"/>
</dbReference>
<dbReference type="CDD" id="cd03699">
    <property type="entry name" value="EF4_II"/>
    <property type="match status" value="1"/>
</dbReference>
<dbReference type="CDD" id="cd16260">
    <property type="entry name" value="EF4_III"/>
    <property type="match status" value="1"/>
</dbReference>
<dbReference type="CDD" id="cd01890">
    <property type="entry name" value="LepA"/>
    <property type="match status" value="1"/>
</dbReference>
<dbReference type="CDD" id="cd03709">
    <property type="entry name" value="lepA_C"/>
    <property type="match status" value="1"/>
</dbReference>
<dbReference type="FunFam" id="3.40.50.300:FF:000078">
    <property type="entry name" value="Elongation factor 4"/>
    <property type="match status" value="1"/>
</dbReference>
<dbReference type="FunFam" id="2.40.30.10:FF:000015">
    <property type="entry name" value="Translation factor GUF1, mitochondrial"/>
    <property type="match status" value="1"/>
</dbReference>
<dbReference type="FunFam" id="3.30.70.240:FF:000007">
    <property type="entry name" value="Translation factor GUF1, mitochondrial"/>
    <property type="match status" value="1"/>
</dbReference>
<dbReference type="FunFam" id="3.30.70.2570:FF:000001">
    <property type="entry name" value="Translation factor GUF1, mitochondrial"/>
    <property type="match status" value="1"/>
</dbReference>
<dbReference type="FunFam" id="3.30.70.870:FF:000004">
    <property type="entry name" value="Translation factor GUF1, mitochondrial"/>
    <property type="match status" value="1"/>
</dbReference>
<dbReference type="Gene3D" id="3.30.70.240">
    <property type="match status" value="1"/>
</dbReference>
<dbReference type="Gene3D" id="3.30.70.2570">
    <property type="entry name" value="Elongation factor 4, C-terminal domain"/>
    <property type="match status" value="1"/>
</dbReference>
<dbReference type="Gene3D" id="3.30.70.870">
    <property type="entry name" value="Elongation Factor G (Translational Gtpase), domain 3"/>
    <property type="match status" value="1"/>
</dbReference>
<dbReference type="Gene3D" id="3.40.50.300">
    <property type="entry name" value="P-loop containing nucleotide triphosphate hydrolases"/>
    <property type="match status" value="1"/>
</dbReference>
<dbReference type="Gene3D" id="2.40.30.10">
    <property type="entry name" value="Translation factors"/>
    <property type="match status" value="1"/>
</dbReference>
<dbReference type="HAMAP" id="MF_00071">
    <property type="entry name" value="LepA"/>
    <property type="match status" value="1"/>
</dbReference>
<dbReference type="InterPro" id="IPR006297">
    <property type="entry name" value="EF-4"/>
</dbReference>
<dbReference type="InterPro" id="IPR035647">
    <property type="entry name" value="EFG_III/V"/>
</dbReference>
<dbReference type="InterPro" id="IPR000640">
    <property type="entry name" value="EFG_V-like"/>
</dbReference>
<dbReference type="InterPro" id="IPR004161">
    <property type="entry name" value="EFTu-like_2"/>
</dbReference>
<dbReference type="InterPro" id="IPR031157">
    <property type="entry name" value="G_TR_CS"/>
</dbReference>
<dbReference type="InterPro" id="IPR038363">
    <property type="entry name" value="LepA_C_sf"/>
</dbReference>
<dbReference type="InterPro" id="IPR013842">
    <property type="entry name" value="LepA_CTD"/>
</dbReference>
<dbReference type="InterPro" id="IPR035654">
    <property type="entry name" value="LepA_IV"/>
</dbReference>
<dbReference type="InterPro" id="IPR027417">
    <property type="entry name" value="P-loop_NTPase"/>
</dbReference>
<dbReference type="InterPro" id="IPR005225">
    <property type="entry name" value="Small_GTP-bd"/>
</dbReference>
<dbReference type="InterPro" id="IPR000795">
    <property type="entry name" value="T_Tr_GTP-bd_dom"/>
</dbReference>
<dbReference type="InterPro" id="IPR009000">
    <property type="entry name" value="Transl_B-barrel_sf"/>
</dbReference>
<dbReference type="NCBIfam" id="TIGR01393">
    <property type="entry name" value="lepA"/>
    <property type="match status" value="1"/>
</dbReference>
<dbReference type="NCBIfam" id="TIGR00231">
    <property type="entry name" value="small_GTP"/>
    <property type="match status" value="1"/>
</dbReference>
<dbReference type="PANTHER" id="PTHR43512:SF4">
    <property type="entry name" value="TRANSLATION FACTOR GUF1 HOMOLOG, CHLOROPLASTIC"/>
    <property type="match status" value="1"/>
</dbReference>
<dbReference type="PANTHER" id="PTHR43512">
    <property type="entry name" value="TRANSLATION FACTOR GUF1-RELATED"/>
    <property type="match status" value="1"/>
</dbReference>
<dbReference type="Pfam" id="PF00679">
    <property type="entry name" value="EFG_C"/>
    <property type="match status" value="1"/>
</dbReference>
<dbReference type="Pfam" id="PF00009">
    <property type="entry name" value="GTP_EFTU"/>
    <property type="match status" value="1"/>
</dbReference>
<dbReference type="Pfam" id="PF03144">
    <property type="entry name" value="GTP_EFTU_D2"/>
    <property type="match status" value="1"/>
</dbReference>
<dbReference type="Pfam" id="PF06421">
    <property type="entry name" value="LepA_C"/>
    <property type="match status" value="1"/>
</dbReference>
<dbReference type="PRINTS" id="PR00315">
    <property type="entry name" value="ELONGATNFCT"/>
</dbReference>
<dbReference type="SMART" id="SM00838">
    <property type="entry name" value="EFG_C"/>
    <property type="match status" value="1"/>
</dbReference>
<dbReference type="SUPFAM" id="SSF54980">
    <property type="entry name" value="EF-G C-terminal domain-like"/>
    <property type="match status" value="2"/>
</dbReference>
<dbReference type="SUPFAM" id="SSF52540">
    <property type="entry name" value="P-loop containing nucleoside triphosphate hydrolases"/>
    <property type="match status" value="1"/>
</dbReference>
<dbReference type="SUPFAM" id="SSF50447">
    <property type="entry name" value="Translation proteins"/>
    <property type="match status" value="1"/>
</dbReference>
<dbReference type="PROSITE" id="PS00301">
    <property type="entry name" value="G_TR_1"/>
    <property type="match status" value="1"/>
</dbReference>
<dbReference type="PROSITE" id="PS51722">
    <property type="entry name" value="G_TR_2"/>
    <property type="match status" value="1"/>
</dbReference>
<accession>A7Z6W5</accession>